<keyword id="KW-0963">Cytoplasm</keyword>
<keyword id="KW-0285">Flavoprotein</keyword>
<keyword id="KW-0288">FMN</keyword>
<keyword id="KW-0560">Oxidoreductase</keyword>
<keyword id="KW-0665">Pyrimidine biosynthesis</keyword>
<organism>
    <name type="scientific">Lachancea kluyveri (strain ATCC 58438 / CBS 3082 / BCRC 21498 / NBRC 1685 / JCM 7257 / NCYC 543 / NRRL Y-12651)</name>
    <name type="common">Yeast</name>
    <name type="synonym">Saccharomyces kluyveri</name>
    <dbReference type="NCBI Taxonomy" id="226302"/>
    <lineage>
        <taxon>Eukaryota</taxon>
        <taxon>Fungi</taxon>
        <taxon>Dikarya</taxon>
        <taxon>Ascomycota</taxon>
        <taxon>Saccharomycotina</taxon>
        <taxon>Saccharomycetes</taxon>
        <taxon>Saccharomycetales</taxon>
        <taxon>Saccharomycetaceae</taxon>
        <taxon>Lachancea</taxon>
    </lineage>
</organism>
<accession>Q7Z892</accession>
<gene>
    <name type="primary">URA1</name>
</gene>
<sequence>MSASLAINFLNHTYENPFMNASGVHCMSTKELDELKDSRAGAFITKSSTTSKREGNPEPRYFSVPLGSINSMGLPNEGFDYYLKYALEYQKNGSTSTPLFFSVAGMSVEENLKMLQKIQDSDFNGITELNLSCPNVPGKPQVAYDFELTKEILTKVFEFFKKPLGVKLPPYFDFAHFDIMAGILNQLPLSYVNCINSIGNGLYINVETESVVVKPKNGFGGIGGEYVKPTALANVRAFYTRLNPTIKIIGTGGIKTGQDAFEHLLCGATMLQVGTELYKEGVSIFDRLERELKELMDKKGYTSIEQFRGKLNSL</sequence>
<feature type="chain" id="PRO_0000148503" description="Dihydroorotate dehydrogenase (fumarate)">
    <location>
        <begin position="1"/>
        <end position="314"/>
    </location>
</feature>
<feature type="active site" description="Nucleophile" evidence="1">
    <location>
        <position position="132"/>
    </location>
</feature>
<feature type="active site" description="Nucleophile" evidence="1">
    <location>
        <position position="133"/>
    </location>
</feature>
<feature type="binding site" evidence="1">
    <location>
        <begin position="46"/>
        <end position="47"/>
    </location>
    <ligand>
        <name>FMN</name>
        <dbReference type="ChEBI" id="CHEBI:58210"/>
    </ligand>
</feature>
<feature type="binding site" evidence="1">
    <location>
        <position position="46"/>
    </location>
    <ligand>
        <name>substrate</name>
    </ligand>
</feature>
<feature type="binding site" evidence="1">
    <location>
        <begin position="70"/>
        <end position="74"/>
    </location>
    <ligand>
        <name>substrate</name>
    </ligand>
</feature>
<feature type="binding site" evidence="1">
    <location>
        <position position="130"/>
    </location>
    <ligand>
        <name>FMN</name>
        <dbReference type="ChEBI" id="CHEBI:58210"/>
    </ligand>
</feature>
<feature type="binding site" evidence="1">
    <location>
        <position position="130"/>
    </location>
    <ligand>
        <name>substrate</name>
    </ligand>
</feature>
<feature type="binding site" evidence="1">
    <location>
        <position position="167"/>
    </location>
    <ligand>
        <name>FMN</name>
        <dbReference type="ChEBI" id="CHEBI:58210"/>
    </ligand>
</feature>
<feature type="binding site" evidence="1">
    <location>
        <position position="195"/>
    </location>
    <ligand>
        <name>FMN</name>
        <dbReference type="ChEBI" id="CHEBI:58210"/>
    </ligand>
</feature>
<feature type="binding site" evidence="1">
    <location>
        <begin position="196"/>
        <end position="197"/>
    </location>
    <ligand>
        <name>substrate</name>
    </ligand>
</feature>
<feature type="binding site" evidence="1">
    <location>
        <position position="224"/>
    </location>
    <ligand>
        <name>FMN</name>
        <dbReference type="ChEBI" id="CHEBI:58210"/>
    </ligand>
</feature>
<feature type="binding site" evidence="1">
    <location>
        <begin position="252"/>
        <end position="253"/>
    </location>
    <ligand>
        <name>FMN</name>
        <dbReference type="ChEBI" id="CHEBI:58210"/>
    </ligand>
</feature>
<feature type="binding site" evidence="1">
    <location>
        <begin position="274"/>
        <end position="275"/>
    </location>
    <ligand>
        <name>FMN</name>
        <dbReference type="ChEBI" id="CHEBI:58210"/>
    </ligand>
</feature>
<proteinExistence type="evidence at protein level"/>
<dbReference type="EC" id="1.3.98.1"/>
<dbReference type="EMBL" id="AY323902">
    <property type="protein sequence ID" value="AAQ01779.1"/>
    <property type="molecule type" value="Genomic_DNA"/>
</dbReference>
<dbReference type="EMBL" id="AF452109">
    <property type="protein sequence ID" value="AAQ04683.1"/>
    <property type="molecule type" value="Genomic_DNA"/>
</dbReference>
<dbReference type="SMR" id="Q7Z892"/>
<dbReference type="SABIO-RK" id="Q7Z892"/>
<dbReference type="UniPathway" id="UPA00070"/>
<dbReference type="GO" id="GO:0005737">
    <property type="term" value="C:cytoplasm"/>
    <property type="evidence" value="ECO:0007669"/>
    <property type="project" value="UniProtKB-SubCell"/>
</dbReference>
<dbReference type="GO" id="GO:1990663">
    <property type="term" value="F:dihydroorotate dehydrogenase (fumarate) activity"/>
    <property type="evidence" value="ECO:0007669"/>
    <property type="project" value="UniProtKB-EC"/>
</dbReference>
<dbReference type="GO" id="GO:0006207">
    <property type="term" value="P:'de novo' pyrimidine nucleobase biosynthetic process"/>
    <property type="evidence" value="ECO:0007669"/>
    <property type="project" value="InterPro"/>
</dbReference>
<dbReference type="GO" id="GO:0044205">
    <property type="term" value="P:'de novo' UMP biosynthetic process"/>
    <property type="evidence" value="ECO:0007669"/>
    <property type="project" value="UniProtKB-UniPathway"/>
</dbReference>
<dbReference type="CDD" id="cd04741">
    <property type="entry name" value="DHOD_1A_like"/>
    <property type="match status" value="1"/>
</dbReference>
<dbReference type="FunFam" id="3.20.20.70:FF:000027">
    <property type="entry name" value="Dihydropyrimidine dehydrogenase [NADP(+)]"/>
    <property type="match status" value="1"/>
</dbReference>
<dbReference type="Gene3D" id="3.20.20.70">
    <property type="entry name" value="Aldolase class I"/>
    <property type="match status" value="1"/>
</dbReference>
<dbReference type="Gene3D" id="2.30.26.10">
    <property type="entry name" value="Dihydroorotate Dehydrogenase A, chain A, domain 2"/>
    <property type="match status" value="1"/>
</dbReference>
<dbReference type="HAMAP" id="MF_00224">
    <property type="entry name" value="DHO_dh_type1"/>
    <property type="match status" value="1"/>
</dbReference>
<dbReference type="InterPro" id="IPR013785">
    <property type="entry name" value="Aldolase_TIM"/>
</dbReference>
<dbReference type="InterPro" id="IPR050074">
    <property type="entry name" value="DHO_dehydrogenase"/>
</dbReference>
<dbReference type="InterPro" id="IPR033886">
    <property type="entry name" value="DHOD_1A"/>
</dbReference>
<dbReference type="InterPro" id="IPR023359">
    <property type="entry name" value="Dihydro_DH_chainA_dom2"/>
</dbReference>
<dbReference type="InterPro" id="IPR024920">
    <property type="entry name" value="Dihydroorotate_DH_1"/>
</dbReference>
<dbReference type="InterPro" id="IPR012135">
    <property type="entry name" value="Dihydroorotate_DH_1_2"/>
</dbReference>
<dbReference type="InterPro" id="IPR005720">
    <property type="entry name" value="Dihydroorotate_DH_cat"/>
</dbReference>
<dbReference type="InterPro" id="IPR001295">
    <property type="entry name" value="Dihydroorotate_DH_CS"/>
</dbReference>
<dbReference type="NCBIfam" id="NF002702">
    <property type="entry name" value="PRK02506.1"/>
    <property type="match status" value="1"/>
</dbReference>
<dbReference type="PANTHER" id="PTHR48109:SF1">
    <property type="entry name" value="DIHYDROOROTATE DEHYDROGENASE (FUMARATE)"/>
    <property type="match status" value="1"/>
</dbReference>
<dbReference type="PANTHER" id="PTHR48109">
    <property type="entry name" value="DIHYDROOROTATE DEHYDROGENASE (QUINONE), MITOCHONDRIAL-RELATED"/>
    <property type="match status" value="1"/>
</dbReference>
<dbReference type="Pfam" id="PF01180">
    <property type="entry name" value="DHO_dh"/>
    <property type="match status" value="1"/>
</dbReference>
<dbReference type="PIRSF" id="PIRSF000164">
    <property type="entry name" value="DHO_oxidase"/>
    <property type="match status" value="1"/>
</dbReference>
<dbReference type="SUPFAM" id="SSF51395">
    <property type="entry name" value="FMN-linked oxidoreductases"/>
    <property type="match status" value="1"/>
</dbReference>
<dbReference type="PROSITE" id="PS00911">
    <property type="entry name" value="DHODEHASE_1"/>
    <property type="match status" value="1"/>
</dbReference>
<dbReference type="PROSITE" id="PS00912">
    <property type="entry name" value="DHODEHASE_2"/>
    <property type="match status" value="1"/>
</dbReference>
<name>PYRD1_LACK1</name>
<evidence type="ECO:0000250" key="1"/>
<evidence type="ECO:0000305" key="2"/>
<protein>
    <recommendedName>
        <fullName>Dihydroorotate dehydrogenase (fumarate)</fullName>
        <shortName>DHOD</shortName>
        <shortName>DHODase</shortName>
        <shortName>DHOdehase</shortName>
        <ecNumber>1.3.98.1</ecNumber>
    </recommendedName>
    <alternativeName>
        <fullName>Dihydroorotate oxidase</fullName>
    </alternativeName>
</protein>
<comment type="function">
    <text evidence="1">Catalyzes the conversion of dihydroorotate to orotate with fumarate as the electron acceptor.</text>
</comment>
<comment type="catalytic activity">
    <reaction>
        <text>(S)-dihydroorotate + fumarate = orotate + succinate</text>
        <dbReference type="Rhea" id="RHEA:30059"/>
        <dbReference type="ChEBI" id="CHEBI:29806"/>
        <dbReference type="ChEBI" id="CHEBI:30031"/>
        <dbReference type="ChEBI" id="CHEBI:30839"/>
        <dbReference type="ChEBI" id="CHEBI:30864"/>
        <dbReference type="EC" id="1.3.98.1"/>
    </reaction>
</comment>
<comment type="cofactor">
    <cofactor evidence="1">
        <name>FMN</name>
        <dbReference type="ChEBI" id="CHEBI:58210"/>
    </cofactor>
    <text evidence="1">Binds 1 FMN per subunit.</text>
</comment>
<comment type="activity regulation">
    <text>The activity is independent of the presence of oxygen.</text>
</comment>
<comment type="pathway">
    <text>Pyrimidine metabolism; UMP biosynthesis via de novo pathway.</text>
</comment>
<comment type="subunit">
    <text evidence="1">Homodimer.</text>
</comment>
<comment type="subcellular location">
    <subcellularLocation>
        <location evidence="1">Cytoplasm</location>
    </subcellularLocation>
</comment>
<comment type="miscellaneous">
    <text>S.kluyveri has two isoforms of DHODase, a cytoplasmic isoform and a mitochondrial isoform.</text>
</comment>
<comment type="similarity">
    <text evidence="2">Belongs to the dihydroorotate dehydrogenase family. Type 1 subfamily.</text>
</comment>
<reference key="1">
    <citation type="journal article" date="2005" name="Eukaryot. Cell">
        <title>Contribution of horizontal gene transfer to the evolution of Saccharomyces cerevisiae.</title>
        <authorList>
            <person name="Hall C.R."/>
            <person name="Brachat S."/>
            <person name="Dietrich F.S."/>
        </authorList>
    </citation>
    <scope>NUCLEOTIDE SEQUENCE [GENOMIC DNA]</scope>
    <source>
        <strain>ATCC 58438 / CBS 3082 / BCRC 21498 / NBRC 1685 / JCM 7257 / NCYC 543 / NRRL Y-12651</strain>
    </source>
</reference>
<reference key="2">
    <citation type="journal article" date="2004" name="Mol. Genet. Genomics">
        <title>Horizontal gene transfer promoted evolution of the ability to propagate under anaerobic conditions in yeasts.</title>
        <authorList>
            <person name="Gojkovic Z."/>
            <person name="Knecht W."/>
            <person name="Zameitat E."/>
            <person name="Warneboldt J."/>
            <person name="Coutelis J.-B."/>
            <person name="Pynyaha Y."/>
            <person name="Neuveglise C."/>
            <person name="Moeller K."/>
            <person name="Loeffler M."/>
            <person name="Piskur J."/>
        </authorList>
    </citation>
    <scope>NUCLEOTIDE SEQUENCE [GENOMIC DNA]</scope>
    <scope>CHARACTERIZATION</scope>
</reference>